<organism>
    <name type="scientific">Azobacteroides pseudotrichonymphae genomovar. CFP2</name>
    <dbReference type="NCBI Taxonomy" id="511995"/>
    <lineage>
        <taxon>Bacteria</taxon>
        <taxon>Pseudomonadati</taxon>
        <taxon>Bacteroidota</taxon>
        <taxon>Bacteroidia</taxon>
        <taxon>Bacteroidales</taxon>
        <taxon>Candidatus Azobacteroides</taxon>
    </lineage>
</organism>
<feature type="chain" id="PRO_1000196752" description="Bifunctional protein FolD">
    <location>
        <begin position="1"/>
        <end position="293"/>
    </location>
</feature>
<feature type="binding site" evidence="1">
    <location>
        <begin position="164"/>
        <end position="166"/>
    </location>
    <ligand>
        <name>NADP(+)</name>
        <dbReference type="ChEBI" id="CHEBI:58349"/>
    </ligand>
</feature>
<feature type="binding site" evidence="1">
    <location>
        <position position="193"/>
    </location>
    <ligand>
        <name>NADP(+)</name>
        <dbReference type="ChEBI" id="CHEBI:58349"/>
    </ligand>
</feature>
<feature type="binding site" evidence="1">
    <location>
        <position position="234"/>
    </location>
    <ligand>
        <name>NADP(+)</name>
        <dbReference type="ChEBI" id="CHEBI:58349"/>
    </ligand>
</feature>
<protein>
    <recommendedName>
        <fullName evidence="1">Bifunctional protein FolD</fullName>
    </recommendedName>
    <domain>
        <recommendedName>
            <fullName evidence="1">Methylenetetrahydrofolate dehydrogenase</fullName>
            <ecNumber evidence="1">1.5.1.5</ecNumber>
        </recommendedName>
    </domain>
    <domain>
        <recommendedName>
            <fullName evidence="1">Methenyltetrahydrofolate cyclohydrolase</fullName>
            <ecNumber evidence="1">3.5.4.9</ecNumber>
        </recommendedName>
    </domain>
</protein>
<proteinExistence type="inferred from homology"/>
<evidence type="ECO:0000255" key="1">
    <source>
        <dbReference type="HAMAP-Rule" id="MF_01576"/>
    </source>
</evidence>
<name>FOLD_AZOPC</name>
<gene>
    <name evidence="1" type="primary">folD</name>
    <name type="ordered locus">CFPG_618</name>
</gene>
<dbReference type="EC" id="1.5.1.5" evidence="1"/>
<dbReference type="EC" id="3.5.4.9" evidence="1"/>
<dbReference type="EMBL" id="AP010656">
    <property type="protein sequence ID" value="BAG83881.1"/>
    <property type="molecule type" value="Genomic_DNA"/>
</dbReference>
<dbReference type="RefSeq" id="WP_012573641.1">
    <property type="nucleotide sequence ID" value="NC_011565.1"/>
</dbReference>
<dbReference type="SMR" id="B6YRQ9"/>
<dbReference type="STRING" id="511995.CFPG_618"/>
<dbReference type="KEGG" id="aps:CFPG_618"/>
<dbReference type="eggNOG" id="COG0190">
    <property type="taxonomic scope" value="Bacteria"/>
</dbReference>
<dbReference type="HOGENOM" id="CLU_034045_2_1_10"/>
<dbReference type="OrthoDB" id="9803580at2"/>
<dbReference type="UniPathway" id="UPA00193"/>
<dbReference type="Proteomes" id="UP000000723">
    <property type="component" value="Chromosome"/>
</dbReference>
<dbReference type="GO" id="GO:0005829">
    <property type="term" value="C:cytosol"/>
    <property type="evidence" value="ECO:0007669"/>
    <property type="project" value="TreeGrafter"/>
</dbReference>
<dbReference type="GO" id="GO:0004477">
    <property type="term" value="F:methenyltetrahydrofolate cyclohydrolase activity"/>
    <property type="evidence" value="ECO:0007669"/>
    <property type="project" value="UniProtKB-UniRule"/>
</dbReference>
<dbReference type="GO" id="GO:0004488">
    <property type="term" value="F:methylenetetrahydrofolate dehydrogenase (NADP+) activity"/>
    <property type="evidence" value="ECO:0007669"/>
    <property type="project" value="UniProtKB-UniRule"/>
</dbReference>
<dbReference type="GO" id="GO:0000105">
    <property type="term" value="P:L-histidine biosynthetic process"/>
    <property type="evidence" value="ECO:0007669"/>
    <property type="project" value="UniProtKB-KW"/>
</dbReference>
<dbReference type="GO" id="GO:0009086">
    <property type="term" value="P:methionine biosynthetic process"/>
    <property type="evidence" value="ECO:0007669"/>
    <property type="project" value="UniProtKB-KW"/>
</dbReference>
<dbReference type="GO" id="GO:0006164">
    <property type="term" value="P:purine nucleotide biosynthetic process"/>
    <property type="evidence" value="ECO:0007669"/>
    <property type="project" value="UniProtKB-KW"/>
</dbReference>
<dbReference type="GO" id="GO:0035999">
    <property type="term" value="P:tetrahydrofolate interconversion"/>
    <property type="evidence" value="ECO:0007669"/>
    <property type="project" value="UniProtKB-UniRule"/>
</dbReference>
<dbReference type="CDD" id="cd01080">
    <property type="entry name" value="NAD_bind_m-THF_DH_Cyclohyd"/>
    <property type="match status" value="1"/>
</dbReference>
<dbReference type="FunFam" id="3.40.50.720:FF:000189">
    <property type="entry name" value="Bifunctional protein FolD"/>
    <property type="match status" value="1"/>
</dbReference>
<dbReference type="FunFam" id="3.40.50.10860:FF:000005">
    <property type="entry name" value="C-1-tetrahydrofolate synthase, cytoplasmic, putative"/>
    <property type="match status" value="1"/>
</dbReference>
<dbReference type="Gene3D" id="3.40.50.10860">
    <property type="entry name" value="Leucine Dehydrogenase, chain A, domain 1"/>
    <property type="match status" value="1"/>
</dbReference>
<dbReference type="Gene3D" id="3.40.50.720">
    <property type="entry name" value="NAD(P)-binding Rossmann-like Domain"/>
    <property type="match status" value="1"/>
</dbReference>
<dbReference type="HAMAP" id="MF_01576">
    <property type="entry name" value="THF_DHG_CYH"/>
    <property type="match status" value="1"/>
</dbReference>
<dbReference type="InterPro" id="IPR046346">
    <property type="entry name" value="Aminoacid_DH-like_N_sf"/>
</dbReference>
<dbReference type="InterPro" id="IPR036291">
    <property type="entry name" value="NAD(P)-bd_dom_sf"/>
</dbReference>
<dbReference type="InterPro" id="IPR000672">
    <property type="entry name" value="THF_DH/CycHdrlase"/>
</dbReference>
<dbReference type="InterPro" id="IPR020630">
    <property type="entry name" value="THF_DH/CycHdrlase_cat_dom"/>
</dbReference>
<dbReference type="InterPro" id="IPR020867">
    <property type="entry name" value="THF_DH/CycHdrlase_CS"/>
</dbReference>
<dbReference type="InterPro" id="IPR020631">
    <property type="entry name" value="THF_DH/CycHdrlase_NAD-bd_dom"/>
</dbReference>
<dbReference type="NCBIfam" id="NF010782">
    <property type="entry name" value="PRK14185.1"/>
    <property type="match status" value="1"/>
</dbReference>
<dbReference type="PANTHER" id="PTHR48099:SF5">
    <property type="entry name" value="C-1-TETRAHYDROFOLATE SYNTHASE, CYTOPLASMIC"/>
    <property type="match status" value="1"/>
</dbReference>
<dbReference type="PANTHER" id="PTHR48099">
    <property type="entry name" value="C-1-TETRAHYDROFOLATE SYNTHASE, CYTOPLASMIC-RELATED"/>
    <property type="match status" value="1"/>
</dbReference>
<dbReference type="Pfam" id="PF00763">
    <property type="entry name" value="THF_DHG_CYH"/>
    <property type="match status" value="1"/>
</dbReference>
<dbReference type="Pfam" id="PF02882">
    <property type="entry name" value="THF_DHG_CYH_C"/>
    <property type="match status" value="1"/>
</dbReference>
<dbReference type="PRINTS" id="PR00085">
    <property type="entry name" value="THFDHDRGNASE"/>
</dbReference>
<dbReference type="SUPFAM" id="SSF53223">
    <property type="entry name" value="Aminoacid dehydrogenase-like, N-terminal domain"/>
    <property type="match status" value="1"/>
</dbReference>
<dbReference type="SUPFAM" id="SSF51735">
    <property type="entry name" value="NAD(P)-binding Rossmann-fold domains"/>
    <property type="match status" value="1"/>
</dbReference>
<dbReference type="PROSITE" id="PS00766">
    <property type="entry name" value="THF_DHG_CYH_1"/>
    <property type="match status" value="1"/>
</dbReference>
<dbReference type="PROSITE" id="PS00767">
    <property type="entry name" value="THF_DHG_CYH_2"/>
    <property type="match status" value="1"/>
</dbReference>
<keyword id="KW-0028">Amino-acid biosynthesis</keyword>
<keyword id="KW-0368">Histidine biosynthesis</keyword>
<keyword id="KW-0378">Hydrolase</keyword>
<keyword id="KW-0486">Methionine biosynthesis</keyword>
<keyword id="KW-0511">Multifunctional enzyme</keyword>
<keyword id="KW-0521">NADP</keyword>
<keyword id="KW-0554">One-carbon metabolism</keyword>
<keyword id="KW-0560">Oxidoreductase</keyword>
<keyword id="KW-0658">Purine biosynthesis</keyword>
<keyword id="KW-1185">Reference proteome</keyword>
<reference key="1">
    <citation type="journal article" date="2008" name="Science">
        <title>Genome of an endosymbiont coupling N2 fixation to cellulolysis within RT protist cells in termite gut.</title>
        <authorList>
            <person name="Hongoh Y."/>
            <person name="Sharma V.K."/>
            <person name="Prakash T."/>
            <person name="Noda S."/>
            <person name="Toh H."/>
            <person name="Taylor T.D."/>
            <person name="Kudo T."/>
            <person name="Sakaki Y."/>
            <person name="Toyoda A."/>
            <person name="Hattori M."/>
            <person name="Ohkuma M."/>
        </authorList>
    </citation>
    <scope>NUCLEOTIDE SEQUENCE [LARGE SCALE GENOMIC DNA]</scope>
</reference>
<accession>B6YRQ9</accession>
<sequence>MTLMDGRAIAAQIKLEITKEVQQIVINGEKKPHLAAILVGHDCSSETYVANKVKTCEELGFQSTLIRYESDLIENKLLATVEKLNQDSNIDGFIIQLPLPKHISEQKVIEAIDYKKDVDGFHPVNAGRMAIGLPCFVPATPAGILELLKRYKITTAGKHCVVLGRSNIVGKPIANLLMRKAYPGDCTVTVCHSRTKNILKHCLEADIIIAAMGVPEFLKGNMVKDGVVVIDVGTTRVLSTETDSGFKLRGDVRFKEVAPKCSYISPVPGGVGPMTIISLMRNTLLARKKVIYS</sequence>
<comment type="function">
    <text evidence="1">Catalyzes the oxidation of 5,10-methylenetetrahydrofolate to 5,10-methenyltetrahydrofolate and then the hydrolysis of 5,10-methenyltetrahydrofolate to 10-formyltetrahydrofolate.</text>
</comment>
<comment type="catalytic activity">
    <reaction evidence="1">
        <text>(6R)-5,10-methylene-5,6,7,8-tetrahydrofolate + NADP(+) = (6R)-5,10-methenyltetrahydrofolate + NADPH</text>
        <dbReference type="Rhea" id="RHEA:22812"/>
        <dbReference type="ChEBI" id="CHEBI:15636"/>
        <dbReference type="ChEBI" id="CHEBI:57455"/>
        <dbReference type="ChEBI" id="CHEBI:57783"/>
        <dbReference type="ChEBI" id="CHEBI:58349"/>
        <dbReference type="EC" id="1.5.1.5"/>
    </reaction>
</comment>
<comment type="catalytic activity">
    <reaction evidence="1">
        <text>(6R)-5,10-methenyltetrahydrofolate + H2O = (6R)-10-formyltetrahydrofolate + H(+)</text>
        <dbReference type="Rhea" id="RHEA:23700"/>
        <dbReference type="ChEBI" id="CHEBI:15377"/>
        <dbReference type="ChEBI" id="CHEBI:15378"/>
        <dbReference type="ChEBI" id="CHEBI:57455"/>
        <dbReference type="ChEBI" id="CHEBI:195366"/>
        <dbReference type="EC" id="3.5.4.9"/>
    </reaction>
</comment>
<comment type="pathway">
    <text evidence="1">One-carbon metabolism; tetrahydrofolate interconversion.</text>
</comment>
<comment type="subunit">
    <text evidence="1">Homodimer.</text>
</comment>
<comment type="similarity">
    <text evidence="1">Belongs to the tetrahydrofolate dehydrogenase/cyclohydrolase family.</text>
</comment>